<accession>Q2MIK6</accession>
<evidence type="ECO:0000255" key="1">
    <source>
        <dbReference type="HAMAP-Rule" id="MF_01390"/>
    </source>
</evidence>
<dbReference type="EMBL" id="DQ347958">
    <property type="protein sequence ID" value="ABC56194.1"/>
    <property type="molecule type" value="Genomic_DNA"/>
</dbReference>
<dbReference type="RefSeq" id="YP_538829.1">
    <property type="nucleotide sequence ID" value="NC_007943.1"/>
</dbReference>
<dbReference type="GeneID" id="3989451"/>
<dbReference type="GO" id="GO:0009507">
    <property type="term" value="C:chloroplast"/>
    <property type="evidence" value="ECO:0007669"/>
    <property type="project" value="UniProtKB-SubCell"/>
</dbReference>
<dbReference type="GO" id="GO:0003723">
    <property type="term" value="F:RNA binding"/>
    <property type="evidence" value="ECO:0007669"/>
    <property type="project" value="UniProtKB-KW"/>
</dbReference>
<dbReference type="GO" id="GO:0006397">
    <property type="term" value="P:mRNA processing"/>
    <property type="evidence" value="ECO:0007669"/>
    <property type="project" value="UniProtKB-KW"/>
</dbReference>
<dbReference type="GO" id="GO:0008380">
    <property type="term" value="P:RNA splicing"/>
    <property type="evidence" value="ECO:0007669"/>
    <property type="project" value="UniProtKB-UniRule"/>
</dbReference>
<dbReference type="GO" id="GO:0008033">
    <property type="term" value="P:tRNA processing"/>
    <property type="evidence" value="ECO:0007669"/>
    <property type="project" value="UniProtKB-KW"/>
</dbReference>
<dbReference type="HAMAP" id="MF_01390">
    <property type="entry name" value="MatK"/>
    <property type="match status" value="1"/>
</dbReference>
<dbReference type="InterPro" id="IPR024937">
    <property type="entry name" value="Domain_X"/>
</dbReference>
<dbReference type="InterPro" id="IPR002866">
    <property type="entry name" value="Maturase_MatK"/>
</dbReference>
<dbReference type="InterPro" id="IPR024942">
    <property type="entry name" value="Maturase_MatK_N"/>
</dbReference>
<dbReference type="PANTHER" id="PTHR34811">
    <property type="entry name" value="MATURASE K"/>
    <property type="match status" value="1"/>
</dbReference>
<dbReference type="PANTHER" id="PTHR34811:SF1">
    <property type="entry name" value="MATURASE K"/>
    <property type="match status" value="1"/>
</dbReference>
<dbReference type="Pfam" id="PF01348">
    <property type="entry name" value="Intron_maturas2"/>
    <property type="match status" value="1"/>
</dbReference>
<dbReference type="Pfam" id="PF01824">
    <property type="entry name" value="MatK_N"/>
    <property type="match status" value="1"/>
</dbReference>
<reference key="1">
    <citation type="journal article" date="2006" name="Theor. Appl. Genet.">
        <title>Complete chloroplast genome sequences of Solanum bulbocastanum, Solanum lycopersicum and comparative analyses with other Solanaceae genomes.</title>
        <authorList>
            <person name="Daniell H."/>
            <person name="Lee S.-B."/>
            <person name="Grevich J."/>
            <person name="Saski C."/>
            <person name="Quesada-Vargas T."/>
            <person name="Guda C."/>
            <person name="Tomkins J."/>
            <person name="Jansen R.K."/>
        </authorList>
    </citation>
    <scope>NUCLEOTIDE SEQUENCE [LARGE SCALE GENOMIC DNA]</scope>
    <source>
        <strain>cv. PT29</strain>
    </source>
</reference>
<protein>
    <recommendedName>
        <fullName evidence="1">Maturase K</fullName>
    </recommendedName>
    <alternativeName>
        <fullName evidence="1">Intron maturase</fullName>
    </alternativeName>
</protein>
<geneLocation type="chloroplast"/>
<feature type="chain" id="PRO_0000355962" description="Maturase K">
    <location>
        <begin position="1"/>
        <end position="509"/>
    </location>
</feature>
<organism>
    <name type="scientific">Solanum bulbocastanum</name>
    <name type="common">Wild potato</name>
    <dbReference type="NCBI Taxonomy" id="147425"/>
    <lineage>
        <taxon>Eukaryota</taxon>
        <taxon>Viridiplantae</taxon>
        <taxon>Streptophyta</taxon>
        <taxon>Embryophyta</taxon>
        <taxon>Tracheophyta</taxon>
        <taxon>Spermatophyta</taxon>
        <taxon>Magnoliopsida</taxon>
        <taxon>eudicotyledons</taxon>
        <taxon>Gunneridae</taxon>
        <taxon>Pentapetalae</taxon>
        <taxon>asterids</taxon>
        <taxon>lamiids</taxon>
        <taxon>Solanales</taxon>
        <taxon>Solanaceae</taxon>
        <taxon>Solanoideae</taxon>
        <taxon>Solaneae</taxon>
        <taxon>Solanum</taxon>
    </lineage>
</organism>
<sequence length="509" mass="60216">MEEIHRYLQPDSSQQHNFLYPLIFQEYIYALAQDHGLNRNRSILLENSGYNNKFSFLIVKRLITRMYQQNHFIISTNDSNKNPFLGCNKSLYSQMISEGFACIVEIPFSIRLISSLSSFEGKKIFKSHNLRSIHSTFPFLEDNFSHLNYVLDILIPYPVHLEILVQTLRYWVKDASSLHLLRFFLHEYCNLNSLITSKKPGYSFSKKNQRFFFFLYNSYVYECESTFVFLRNQSSHLRSTSFGALLERIYFYGKIERLVEVFAKDFQVTLWLFKDPFMHYVRYEGKSILASKGTFPLMNKWKFYLVNFWQCHFSMYFHTGRIHINQLSNHSRDFMGYLSSVRLNHSMVRSQMLENSFLINNPIKKFETLVPIIPLIGSLAKAHFCTVLGHPISKPVWSDLSDSDIIDRFGRICRNLFHYYSGSSKKKTLYRIKYILRLSCARTLARKHKSTVRTFLKRSGSELLEEFLTSEEQVLSLTFPRASSSLWGVYRSRIWYLDIFCINDLANYQ</sequence>
<gene>
    <name evidence="1" type="primary">matK</name>
</gene>
<comment type="function">
    <text evidence="1">Usually encoded in the trnK tRNA gene intron. Probably assists in splicing its own and other chloroplast group II introns.</text>
</comment>
<comment type="subcellular location">
    <subcellularLocation>
        <location>Plastid</location>
        <location>Chloroplast</location>
    </subcellularLocation>
</comment>
<comment type="similarity">
    <text evidence="1">Belongs to the intron maturase 2 family. MatK subfamily.</text>
</comment>
<proteinExistence type="inferred from homology"/>
<keyword id="KW-0150">Chloroplast</keyword>
<keyword id="KW-0507">mRNA processing</keyword>
<keyword id="KW-0934">Plastid</keyword>
<keyword id="KW-0694">RNA-binding</keyword>
<keyword id="KW-0819">tRNA processing</keyword>
<name>MATK_SOLBU</name>